<name>GLTP2_ARATH</name>
<evidence type="ECO:0000303" key="1">
    <source>
    </source>
</evidence>
<evidence type="ECO:0000305" key="2"/>
<evidence type="ECO:0000305" key="3">
    <source>
    </source>
</evidence>
<evidence type="ECO:0000312" key="4">
    <source>
        <dbReference type="Araport" id="AT1G21360"/>
    </source>
</evidence>
<evidence type="ECO:0000312" key="5">
    <source>
        <dbReference type="EMBL" id="AAF87892.1"/>
    </source>
</evidence>
<evidence type="ECO:0000312" key="6">
    <source>
        <dbReference type="EMBL" id="AAS76764.1"/>
    </source>
</evidence>
<keyword id="KW-0445">Lipid transport</keyword>
<keyword id="KW-1185">Reference proteome</keyword>
<keyword id="KW-0813">Transport</keyword>
<organism evidence="6">
    <name type="scientific">Arabidopsis thaliana</name>
    <name type="common">Mouse-ear cress</name>
    <dbReference type="NCBI Taxonomy" id="3702"/>
    <lineage>
        <taxon>Eukaryota</taxon>
        <taxon>Viridiplantae</taxon>
        <taxon>Streptophyta</taxon>
        <taxon>Embryophyta</taxon>
        <taxon>Tracheophyta</taxon>
        <taxon>Spermatophyta</taxon>
        <taxon>Magnoliopsida</taxon>
        <taxon>eudicotyledons</taxon>
        <taxon>Gunneridae</taxon>
        <taxon>Pentapetalae</taxon>
        <taxon>rosids</taxon>
        <taxon>malvids</taxon>
        <taxon>Brassicales</taxon>
        <taxon>Brassicaceae</taxon>
        <taxon>Camelineae</taxon>
        <taxon>Arabidopsis</taxon>
    </lineage>
</organism>
<accession>Q6NLQ3</accession>
<accession>Q9LPL7</accession>
<protein>
    <recommendedName>
        <fullName evidence="1">Glycolipid transfer protein 2</fullName>
    </recommendedName>
</protein>
<comment type="function">
    <text evidence="3">Transfers glycolipids in vitro.</text>
</comment>
<comment type="similarity">
    <text evidence="2">Belongs to the GLTP family.</text>
</comment>
<comment type="sequence caution" evidence="2">
    <conflict type="erroneous gene model prediction">
        <sequence resource="EMBL-CDS" id="AAF87892"/>
    </conflict>
</comment>
<dbReference type="EMBL" id="AC015447">
    <property type="protein sequence ID" value="AAF87892.1"/>
    <property type="status" value="ALT_SEQ"/>
    <property type="molecule type" value="Genomic_DNA"/>
</dbReference>
<dbReference type="EMBL" id="CP002684">
    <property type="protein sequence ID" value="AEE30093.1"/>
    <property type="molecule type" value="Genomic_DNA"/>
</dbReference>
<dbReference type="EMBL" id="BT012277">
    <property type="protein sequence ID" value="AAS76764.1"/>
    <property type="molecule type" value="mRNA"/>
</dbReference>
<dbReference type="EMBL" id="AK221557">
    <property type="protein sequence ID" value="BAD94962.1"/>
    <property type="molecule type" value="mRNA"/>
</dbReference>
<dbReference type="PIR" id="G86346">
    <property type="entry name" value="G86346"/>
</dbReference>
<dbReference type="RefSeq" id="NP_173558.4">
    <property type="nucleotide sequence ID" value="NM_101988.5"/>
</dbReference>
<dbReference type="SMR" id="Q6NLQ3"/>
<dbReference type="FunCoup" id="Q6NLQ3">
    <property type="interactions" value="2227"/>
</dbReference>
<dbReference type="STRING" id="3702.Q6NLQ3"/>
<dbReference type="GlyGen" id="Q6NLQ3">
    <property type="glycosylation" value="1 site"/>
</dbReference>
<dbReference type="PaxDb" id="3702-AT1G21360.1"/>
<dbReference type="EnsemblPlants" id="AT1G21360.1">
    <property type="protein sequence ID" value="AT1G21360.1"/>
    <property type="gene ID" value="AT1G21360"/>
</dbReference>
<dbReference type="GeneID" id="838735"/>
<dbReference type="Gramene" id="AT1G21360.1">
    <property type="protein sequence ID" value="AT1G21360.1"/>
    <property type="gene ID" value="AT1G21360"/>
</dbReference>
<dbReference type="KEGG" id="ath:AT1G21360"/>
<dbReference type="Araport" id="AT1G21360"/>
<dbReference type="TAIR" id="AT1G21360">
    <property type="gene designation" value="GLTP2"/>
</dbReference>
<dbReference type="eggNOG" id="KOG3221">
    <property type="taxonomic scope" value="Eukaryota"/>
</dbReference>
<dbReference type="HOGENOM" id="CLU_079400_1_0_1"/>
<dbReference type="InParanoid" id="Q6NLQ3"/>
<dbReference type="OMA" id="MCEAPET"/>
<dbReference type="PhylomeDB" id="Q6NLQ3"/>
<dbReference type="PRO" id="PR:Q6NLQ3"/>
<dbReference type="Proteomes" id="UP000006548">
    <property type="component" value="Chromosome 1"/>
</dbReference>
<dbReference type="ExpressionAtlas" id="Q6NLQ3">
    <property type="expression patterns" value="baseline and differential"/>
</dbReference>
<dbReference type="GO" id="GO:0005737">
    <property type="term" value="C:cytoplasm"/>
    <property type="evidence" value="ECO:0007669"/>
    <property type="project" value="InterPro"/>
</dbReference>
<dbReference type="GO" id="GO:0120013">
    <property type="term" value="F:lipid transfer activity"/>
    <property type="evidence" value="ECO:0007669"/>
    <property type="project" value="InterPro"/>
</dbReference>
<dbReference type="FunFam" id="1.10.3520.10:FF:000008">
    <property type="entry name" value="Glycolipid transfer protein 2"/>
    <property type="match status" value="1"/>
</dbReference>
<dbReference type="Gene3D" id="1.10.3520.10">
    <property type="entry name" value="Glycolipid transfer protein"/>
    <property type="match status" value="1"/>
</dbReference>
<dbReference type="InterPro" id="IPR036497">
    <property type="entry name" value="GLTP_sf"/>
</dbReference>
<dbReference type="InterPro" id="IPR014830">
    <property type="entry name" value="Glycolipid_transfer_prot_dom"/>
</dbReference>
<dbReference type="PANTHER" id="PTHR10219:SF80">
    <property type="entry name" value="GLYCOLIPID TRANSFER PROTEIN 2"/>
    <property type="match status" value="1"/>
</dbReference>
<dbReference type="PANTHER" id="PTHR10219">
    <property type="entry name" value="GLYCOLIPID TRANSFER PROTEIN-RELATED"/>
    <property type="match status" value="1"/>
</dbReference>
<dbReference type="Pfam" id="PF08718">
    <property type="entry name" value="GLTP"/>
    <property type="match status" value="1"/>
</dbReference>
<dbReference type="SUPFAM" id="SSF110004">
    <property type="entry name" value="Glycolipid transfer protein, GLTP"/>
    <property type="match status" value="1"/>
</dbReference>
<feature type="chain" id="PRO_0000432645" description="Glycolipid transfer protein 2">
    <location>
        <begin position="1"/>
        <end position="223"/>
    </location>
</feature>
<feature type="binding site" evidence="3">
    <location>
        <position position="69"/>
    </location>
    <ligand>
        <name>a ganglioside GM3 (d18:1(4E))</name>
        <dbReference type="ChEBI" id="CHEBI:60065"/>
    </ligand>
</feature>
<feature type="binding site" evidence="3">
    <location>
        <position position="73"/>
    </location>
    <ligand>
        <name>a ganglioside GM3 (d18:1(4E))</name>
        <dbReference type="ChEBI" id="CHEBI:60065"/>
    </ligand>
</feature>
<feature type="binding site" evidence="3">
    <location>
        <position position="116"/>
    </location>
    <ligand>
        <name>a ganglioside GM3 (d18:1(4E))</name>
        <dbReference type="ChEBI" id="CHEBI:60065"/>
    </ligand>
</feature>
<feature type="binding site" evidence="3">
    <location>
        <position position="155"/>
    </location>
    <ligand>
        <name>a ganglioside GM3 (d18:1(4E))</name>
        <dbReference type="ChEBI" id="CHEBI:60065"/>
    </ligand>
</feature>
<reference key="1">
    <citation type="journal article" date="2000" name="Nature">
        <title>Sequence and analysis of chromosome 1 of the plant Arabidopsis thaliana.</title>
        <authorList>
            <person name="Theologis A."/>
            <person name="Ecker J.R."/>
            <person name="Palm C.J."/>
            <person name="Federspiel N.A."/>
            <person name="Kaul S."/>
            <person name="White O."/>
            <person name="Alonso J."/>
            <person name="Altafi H."/>
            <person name="Araujo R."/>
            <person name="Bowman C.L."/>
            <person name="Brooks S.Y."/>
            <person name="Buehler E."/>
            <person name="Chan A."/>
            <person name="Chao Q."/>
            <person name="Chen H."/>
            <person name="Cheuk R.F."/>
            <person name="Chin C.W."/>
            <person name="Chung M.K."/>
            <person name="Conn L."/>
            <person name="Conway A.B."/>
            <person name="Conway A.R."/>
            <person name="Creasy T.H."/>
            <person name="Dewar K."/>
            <person name="Dunn P."/>
            <person name="Etgu P."/>
            <person name="Feldblyum T.V."/>
            <person name="Feng J.-D."/>
            <person name="Fong B."/>
            <person name="Fujii C.Y."/>
            <person name="Gill J.E."/>
            <person name="Goldsmith A.D."/>
            <person name="Haas B."/>
            <person name="Hansen N.F."/>
            <person name="Hughes B."/>
            <person name="Huizar L."/>
            <person name="Hunter J.L."/>
            <person name="Jenkins J."/>
            <person name="Johnson-Hopson C."/>
            <person name="Khan S."/>
            <person name="Khaykin E."/>
            <person name="Kim C.J."/>
            <person name="Koo H.L."/>
            <person name="Kremenetskaia I."/>
            <person name="Kurtz D.B."/>
            <person name="Kwan A."/>
            <person name="Lam B."/>
            <person name="Langin-Hooper S."/>
            <person name="Lee A."/>
            <person name="Lee J.M."/>
            <person name="Lenz C.A."/>
            <person name="Li J.H."/>
            <person name="Li Y.-P."/>
            <person name="Lin X."/>
            <person name="Liu S.X."/>
            <person name="Liu Z.A."/>
            <person name="Luros J.S."/>
            <person name="Maiti R."/>
            <person name="Marziali A."/>
            <person name="Militscher J."/>
            <person name="Miranda M."/>
            <person name="Nguyen M."/>
            <person name="Nierman W.C."/>
            <person name="Osborne B.I."/>
            <person name="Pai G."/>
            <person name="Peterson J."/>
            <person name="Pham P.K."/>
            <person name="Rizzo M."/>
            <person name="Rooney T."/>
            <person name="Rowley D."/>
            <person name="Sakano H."/>
            <person name="Salzberg S.L."/>
            <person name="Schwartz J.R."/>
            <person name="Shinn P."/>
            <person name="Southwick A.M."/>
            <person name="Sun H."/>
            <person name="Tallon L.J."/>
            <person name="Tambunga G."/>
            <person name="Toriumi M.J."/>
            <person name="Town C.D."/>
            <person name="Utterback T."/>
            <person name="Van Aken S."/>
            <person name="Vaysberg M."/>
            <person name="Vysotskaia V.S."/>
            <person name="Walker M."/>
            <person name="Wu D."/>
            <person name="Yu G."/>
            <person name="Fraser C.M."/>
            <person name="Venter J.C."/>
            <person name="Davis R.W."/>
        </authorList>
    </citation>
    <scope>NUCLEOTIDE SEQUENCE [LARGE SCALE GENOMIC DNA]</scope>
    <source>
        <strain>cv. Columbia</strain>
    </source>
</reference>
<reference key="2">
    <citation type="journal article" date="2017" name="Plant J.">
        <title>Araport11: a complete reannotation of the Arabidopsis thaliana reference genome.</title>
        <authorList>
            <person name="Cheng C.Y."/>
            <person name="Krishnakumar V."/>
            <person name="Chan A.P."/>
            <person name="Thibaud-Nissen F."/>
            <person name="Schobel S."/>
            <person name="Town C.D."/>
        </authorList>
    </citation>
    <scope>GENOME REANNOTATION</scope>
    <source>
        <strain>cv. Columbia</strain>
    </source>
</reference>
<reference key="3">
    <citation type="submission" date="2004-03" db="EMBL/GenBank/DDBJ databases">
        <title>Arabidopsis ORF clones.</title>
        <authorList>
            <person name="Cheuk R."/>
            <person name="Chen H."/>
            <person name="Kim C.J."/>
            <person name="Shinn P."/>
            <person name="Carninci P."/>
            <person name="Hayashizaki Y."/>
            <person name="Ishida J."/>
            <person name="Kamiya A."/>
            <person name="Kawai J."/>
            <person name="Narusaka M."/>
            <person name="Sakurai T."/>
            <person name="Satou M."/>
            <person name="Seki M."/>
            <person name="Shinozaki K."/>
            <person name="Ecker J.R."/>
        </authorList>
    </citation>
    <scope>NUCLEOTIDE SEQUENCE [LARGE SCALE MRNA]</scope>
    <source>
        <strain>cv. Columbia</strain>
    </source>
</reference>
<reference key="4">
    <citation type="submission" date="2005-03" db="EMBL/GenBank/DDBJ databases">
        <title>Large-scale analysis of RIKEN Arabidopsis full-length (RAFL) cDNAs.</title>
        <authorList>
            <person name="Totoki Y."/>
            <person name="Seki M."/>
            <person name="Ishida J."/>
            <person name="Nakajima M."/>
            <person name="Enju A."/>
            <person name="Kamiya A."/>
            <person name="Narusaka M."/>
            <person name="Shin-i T."/>
            <person name="Nakagawa M."/>
            <person name="Sakamoto N."/>
            <person name="Oishi K."/>
            <person name="Kohara Y."/>
            <person name="Kobayashi M."/>
            <person name="Toyoda A."/>
            <person name="Sakaki Y."/>
            <person name="Sakurai T."/>
            <person name="Iida K."/>
            <person name="Akiyama K."/>
            <person name="Satou M."/>
            <person name="Toyoda T."/>
            <person name="Konagaya A."/>
            <person name="Carninci P."/>
            <person name="Kawai J."/>
            <person name="Hayashizaki Y."/>
            <person name="Shinozaki K."/>
        </authorList>
    </citation>
    <scope>NUCLEOTIDE SEQUENCE [LARGE SCALE MRNA]</scope>
    <source>
        <strain>cv. Columbia</strain>
    </source>
</reference>
<reference key="5">
    <citation type="journal article" date="2006" name="J. Mol. Biol.">
        <title>Structural evidence for adaptive ligand binding of glycolipid transfer protein.</title>
        <authorList>
            <person name="Airenne T.T."/>
            <person name="Kidron H."/>
            <person name="Nymalm Y."/>
            <person name="Nylund M."/>
            <person name="West G."/>
            <person name="Mattjus P."/>
            <person name="Salminen T.A."/>
        </authorList>
    </citation>
    <scope>FUNCTION</scope>
</reference>
<proteinExistence type="evidence at transcript level"/>
<sequence length="223" mass="25705">MKRKRYEMEKKKKTEIQTAIEELSVFIVTKPADKTEATHIPLRPILSFCSLIIQVLDKIGPTMAVLRQDIDQNIQRLEKFYETDSCVYSNLAEILKKEKEEGTSKMVASCGRALFWLTRTMDFTAGLLRLLSKEMSSKMEELVEECYMTTLKPHHGWIASAAFKVCLKLVPDNKTFMEAIGARDESYDTLREDIDTLSSLLTPILKEIYFVLEQYGLSRLRSM</sequence>
<gene>
    <name evidence="1" type="primary">GLTP2</name>
    <name evidence="4" type="ordered locus">At1g21360</name>
    <name evidence="5" type="ORF">F24J8.2</name>
</gene>